<protein>
    <recommendedName>
        <fullName evidence="1">Chaperonin GroEL</fullName>
        <ecNumber evidence="1">5.6.1.7</ecNumber>
    </recommendedName>
    <alternativeName>
        <fullName evidence="1">60 kDa chaperonin</fullName>
    </alternativeName>
    <alternativeName>
        <fullName evidence="1">Chaperonin-60</fullName>
        <shortName evidence="1">Cpn60</shortName>
    </alternativeName>
</protein>
<dbReference type="EC" id="5.6.1.7" evidence="1"/>
<dbReference type="EMBL" id="CP000361">
    <property type="protein sequence ID" value="ABV66707.1"/>
    <property type="molecule type" value="Genomic_DNA"/>
</dbReference>
<dbReference type="RefSeq" id="WP_004510496.1">
    <property type="nucleotide sequence ID" value="NC_009850.1"/>
</dbReference>
<dbReference type="SMR" id="A8ERY3"/>
<dbReference type="STRING" id="367737.Abu_0432"/>
<dbReference type="GeneID" id="24305377"/>
<dbReference type="KEGG" id="abu:Abu_0432"/>
<dbReference type="eggNOG" id="COG0459">
    <property type="taxonomic scope" value="Bacteria"/>
</dbReference>
<dbReference type="HOGENOM" id="CLU_016503_3_0_7"/>
<dbReference type="Proteomes" id="UP000001136">
    <property type="component" value="Chromosome"/>
</dbReference>
<dbReference type="GO" id="GO:0005737">
    <property type="term" value="C:cytoplasm"/>
    <property type="evidence" value="ECO:0007669"/>
    <property type="project" value="UniProtKB-SubCell"/>
</dbReference>
<dbReference type="GO" id="GO:0005524">
    <property type="term" value="F:ATP binding"/>
    <property type="evidence" value="ECO:0007669"/>
    <property type="project" value="UniProtKB-UniRule"/>
</dbReference>
<dbReference type="GO" id="GO:0140662">
    <property type="term" value="F:ATP-dependent protein folding chaperone"/>
    <property type="evidence" value="ECO:0007669"/>
    <property type="project" value="InterPro"/>
</dbReference>
<dbReference type="GO" id="GO:0016853">
    <property type="term" value="F:isomerase activity"/>
    <property type="evidence" value="ECO:0007669"/>
    <property type="project" value="UniProtKB-KW"/>
</dbReference>
<dbReference type="GO" id="GO:0051082">
    <property type="term" value="F:unfolded protein binding"/>
    <property type="evidence" value="ECO:0007669"/>
    <property type="project" value="UniProtKB-UniRule"/>
</dbReference>
<dbReference type="GO" id="GO:0042026">
    <property type="term" value="P:protein refolding"/>
    <property type="evidence" value="ECO:0007669"/>
    <property type="project" value="UniProtKB-UniRule"/>
</dbReference>
<dbReference type="CDD" id="cd03344">
    <property type="entry name" value="GroEL"/>
    <property type="match status" value="1"/>
</dbReference>
<dbReference type="FunFam" id="3.50.7.10:FF:000001">
    <property type="entry name" value="60 kDa chaperonin"/>
    <property type="match status" value="1"/>
</dbReference>
<dbReference type="Gene3D" id="3.50.7.10">
    <property type="entry name" value="GroEL"/>
    <property type="match status" value="1"/>
</dbReference>
<dbReference type="Gene3D" id="1.10.560.10">
    <property type="entry name" value="GroEL-like equatorial domain"/>
    <property type="match status" value="1"/>
</dbReference>
<dbReference type="Gene3D" id="3.30.260.10">
    <property type="entry name" value="TCP-1-like chaperonin intermediate domain"/>
    <property type="match status" value="1"/>
</dbReference>
<dbReference type="HAMAP" id="MF_00600">
    <property type="entry name" value="CH60"/>
    <property type="match status" value="1"/>
</dbReference>
<dbReference type="InterPro" id="IPR018370">
    <property type="entry name" value="Chaperonin_Cpn60_CS"/>
</dbReference>
<dbReference type="InterPro" id="IPR001844">
    <property type="entry name" value="Cpn60/GroEL"/>
</dbReference>
<dbReference type="InterPro" id="IPR002423">
    <property type="entry name" value="Cpn60/GroEL/TCP-1"/>
</dbReference>
<dbReference type="InterPro" id="IPR027409">
    <property type="entry name" value="GroEL-like_apical_dom_sf"/>
</dbReference>
<dbReference type="InterPro" id="IPR027413">
    <property type="entry name" value="GROEL-like_equatorial_sf"/>
</dbReference>
<dbReference type="InterPro" id="IPR027410">
    <property type="entry name" value="TCP-1-like_intermed_sf"/>
</dbReference>
<dbReference type="NCBIfam" id="TIGR02348">
    <property type="entry name" value="GroEL"/>
    <property type="match status" value="1"/>
</dbReference>
<dbReference type="NCBIfam" id="NF000592">
    <property type="entry name" value="PRK00013.1"/>
    <property type="match status" value="1"/>
</dbReference>
<dbReference type="NCBIfam" id="NF009487">
    <property type="entry name" value="PRK12849.1"/>
    <property type="match status" value="1"/>
</dbReference>
<dbReference type="NCBIfam" id="NF009488">
    <property type="entry name" value="PRK12850.1"/>
    <property type="match status" value="1"/>
</dbReference>
<dbReference type="NCBIfam" id="NF009489">
    <property type="entry name" value="PRK12851.1"/>
    <property type="match status" value="1"/>
</dbReference>
<dbReference type="PANTHER" id="PTHR45633">
    <property type="entry name" value="60 KDA HEAT SHOCK PROTEIN, MITOCHONDRIAL"/>
    <property type="match status" value="1"/>
</dbReference>
<dbReference type="Pfam" id="PF00118">
    <property type="entry name" value="Cpn60_TCP1"/>
    <property type="match status" value="1"/>
</dbReference>
<dbReference type="PRINTS" id="PR00298">
    <property type="entry name" value="CHAPERONIN60"/>
</dbReference>
<dbReference type="SUPFAM" id="SSF52029">
    <property type="entry name" value="GroEL apical domain-like"/>
    <property type="match status" value="1"/>
</dbReference>
<dbReference type="SUPFAM" id="SSF48592">
    <property type="entry name" value="GroEL equatorial domain-like"/>
    <property type="match status" value="1"/>
</dbReference>
<dbReference type="SUPFAM" id="SSF54849">
    <property type="entry name" value="GroEL-intermediate domain like"/>
    <property type="match status" value="1"/>
</dbReference>
<dbReference type="PROSITE" id="PS00296">
    <property type="entry name" value="CHAPERONINS_CPN60"/>
    <property type="match status" value="1"/>
</dbReference>
<gene>
    <name evidence="1" type="primary">groEL</name>
    <name evidence="1" type="synonym">groL</name>
    <name type="ordered locus">Abu_0432</name>
</gene>
<keyword id="KW-0067">ATP-binding</keyword>
<keyword id="KW-0143">Chaperone</keyword>
<keyword id="KW-0963">Cytoplasm</keyword>
<keyword id="KW-0413">Isomerase</keyword>
<keyword id="KW-0547">Nucleotide-binding</keyword>
<keyword id="KW-1185">Reference proteome</keyword>
<reference key="1">
    <citation type="journal article" date="2007" name="PLoS ONE">
        <title>The complete genome sequence and analysis of the Epsilonproteobacterium Arcobacter butzleri.</title>
        <authorList>
            <person name="Miller W.G."/>
            <person name="Parker C.T."/>
            <person name="Rubenfield M."/>
            <person name="Mendz G.L."/>
            <person name="Woesten M.M.S.M."/>
            <person name="Ussery D.W."/>
            <person name="Stolz J.F."/>
            <person name="Binnewies T.T."/>
            <person name="Hallin P.F."/>
            <person name="Wang G."/>
            <person name="Malek J.A."/>
            <person name="Rogosin A."/>
            <person name="Stanker L.H."/>
            <person name="Mandrell R.E."/>
        </authorList>
    </citation>
    <scope>NUCLEOTIDE SEQUENCE [LARGE SCALE GENOMIC DNA]</scope>
    <source>
        <strain>RM4018</strain>
    </source>
</reference>
<name>CH60_ALIB4</name>
<proteinExistence type="inferred from homology"/>
<evidence type="ECO:0000255" key="1">
    <source>
        <dbReference type="HAMAP-Rule" id="MF_00600"/>
    </source>
</evidence>
<evidence type="ECO:0000256" key="2">
    <source>
        <dbReference type="SAM" id="MobiDB-lite"/>
    </source>
</evidence>
<comment type="function">
    <text evidence="1">Together with its co-chaperonin GroES, plays an essential role in assisting protein folding. The GroEL-GroES system forms a nano-cage that allows encapsulation of the non-native substrate proteins and provides a physical environment optimized to promote and accelerate protein folding.</text>
</comment>
<comment type="catalytic activity">
    <reaction evidence="1">
        <text>ATP + H2O + a folded polypeptide = ADP + phosphate + an unfolded polypeptide.</text>
        <dbReference type="EC" id="5.6.1.7"/>
    </reaction>
</comment>
<comment type="subunit">
    <text evidence="1">Forms a cylinder of 14 subunits composed of two heptameric rings stacked back-to-back. Interacts with the co-chaperonin GroES.</text>
</comment>
<comment type="subcellular location">
    <subcellularLocation>
        <location evidence="1">Cytoplasm</location>
    </subcellularLocation>
</comment>
<comment type="similarity">
    <text evidence="1">Belongs to the chaperonin (HSP60) family.</text>
</comment>
<organism>
    <name type="scientific">Aliarcobacter butzleri (strain RM4018)</name>
    <name type="common">Arcobacter butzleri</name>
    <dbReference type="NCBI Taxonomy" id="367737"/>
    <lineage>
        <taxon>Bacteria</taxon>
        <taxon>Pseudomonadati</taxon>
        <taxon>Campylobacterota</taxon>
        <taxon>Epsilonproteobacteria</taxon>
        <taxon>Campylobacterales</taxon>
        <taxon>Arcobacteraceae</taxon>
        <taxon>Aliarcobacter</taxon>
    </lineage>
</organism>
<sequence>MAKEILFSDNARNRLYSGVEKLADAVKVTMGPRGRNVLLQKSFGAPTITKDGVSVAREIELKDTLENMGAQLVKEVASKTNDEAGDGTTTATVLAHSIFKEGLRNVTAGANPISLKRGMDKACEAILAELKKSSKVVANKTEIEQVATISANSDSAIGKMIAEAMDKVGKDGVITVEEAKGISDELDVVEGMQFDRGYLSPYFVTNPEKMIAEFNNPFILLYDKKISSLKEMLPILESVNQSGRPLVIIAEDVDGEALATLVVNRLRGSLHIAAVKAPGFGDRRKAMLEDIAVLTGGTVISEEMGMKLETAEFSCLGTASKIVIDKDNTTIVDGNGDNERVVARVNQIKAEISNTTSDYDREKLQERLAKLSGGVAVIKVGAATETEMKEKKDRVDDALSATRAAVEEGIVIGGGAALIKASKKVNLDLTGDERIGADIVLRAISAPLKQIAINAGFDAGVVANEVEKSSNENLGFNAATGEYVDMFEAGIVDPAKVERVAMQNAVSVASLLLTTEATVSDIKEDKPAMPSMPDMGGMGMPGMM</sequence>
<accession>A8ERY3</accession>
<feature type="chain" id="PRO_1000061252" description="Chaperonin GroEL">
    <location>
        <begin position="1"/>
        <end position="544"/>
    </location>
</feature>
<feature type="region of interest" description="Disordered" evidence="2">
    <location>
        <begin position="525"/>
        <end position="544"/>
    </location>
</feature>
<feature type="binding site" evidence="1">
    <location>
        <begin position="29"/>
        <end position="32"/>
    </location>
    <ligand>
        <name>ATP</name>
        <dbReference type="ChEBI" id="CHEBI:30616"/>
    </ligand>
</feature>
<feature type="binding site" evidence="1">
    <location>
        <position position="50"/>
    </location>
    <ligand>
        <name>ATP</name>
        <dbReference type="ChEBI" id="CHEBI:30616"/>
    </ligand>
</feature>
<feature type="binding site" evidence="1">
    <location>
        <begin position="86"/>
        <end position="90"/>
    </location>
    <ligand>
        <name>ATP</name>
        <dbReference type="ChEBI" id="CHEBI:30616"/>
    </ligand>
</feature>
<feature type="binding site" evidence="1">
    <location>
        <position position="414"/>
    </location>
    <ligand>
        <name>ATP</name>
        <dbReference type="ChEBI" id="CHEBI:30616"/>
    </ligand>
</feature>
<feature type="binding site" evidence="1">
    <location>
        <begin position="477"/>
        <end position="479"/>
    </location>
    <ligand>
        <name>ATP</name>
        <dbReference type="ChEBI" id="CHEBI:30616"/>
    </ligand>
</feature>
<feature type="binding site" evidence="1">
    <location>
        <position position="493"/>
    </location>
    <ligand>
        <name>ATP</name>
        <dbReference type="ChEBI" id="CHEBI:30616"/>
    </ligand>
</feature>